<organism>
    <name type="scientific">Dickeya chrysanthemi</name>
    <name type="common">Pectobacterium chrysanthemi</name>
    <name type="synonym">Erwinia chrysanthemi</name>
    <dbReference type="NCBI Taxonomy" id="556"/>
    <lineage>
        <taxon>Bacteria</taxon>
        <taxon>Pseudomonadati</taxon>
        <taxon>Pseudomonadota</taxon>
        <taxon>Gammaproteobacteria</taxon>
        <taxon>Enterobacterales</taxon>
        <taxon>Pectobacteriaceae</taxon>
        <taxon>Dickeya</taxon>
    </lineage>
</organism>
<gene>
    <name type="primary">outD</name>
</gene>
<comment type="function">
    <text evidence="1 2 6">Involved in a type II secretion system (T2SS, formerly general secretion pathway, GSP) for the export of proteins (By similarity). Required for the translocation of the multiple pectic enzymes (Probable). This subunit forms the outer membrane channel (By similarity).</text>
</comment>
<comment type="subunit">
    <text evidence="2">Forms a cylindrical channel with 15 subunits.</text>
</comment>
<comment type="subcellular location">
    <subcellularLocation>
        <location evidence="1">Cell outer membrane</location>
    </subcellularLocation>
    <text evidence="2">Most of the protein is in the periplasm which it traverses to contact proteins of the cell inner membrane.</text>
</comment>
<comment type="domain">
    <text evidence="2">The N0, N1, N2 and N3 domains are periplasmic, while the secretin and S domains form a channel that is partially inserted in the outer membrane. The N1, N2 and N3 domains each form a periplasmic ring. The secretin domain forms a double beta-barrel structure; the outer barrel has a diameter of about 110 Angstroms while the inner barrel forms the central gate with a small pore in the closed state.</text>
</comment>
<comment type="similarity">
    <text evidence="5">Belongs to the bacterial secretin family. GSP D subfamily.</text>
</comment>
<keyword id="KW-0998">Cell outer membrane</keyword>
<keyword id="KW-0472">Membrane</keyword>
<keyword id="KW-0653">Protein transport</keyword>
<keyword id="KW-0732">Signal</keyword>
<keyword id="KW-0812">Transmembrane</keyword>
<keyword id="KW-1134">Transmembrane beta strand</keyword>
<keyword id="KW-0813">Transport</keyword>
<reference key="1">
    <citation type="journal article" date="1992" name="J. Bacteriol.">
        <title>Analysis of eight out genes in a cluster required for pectic enzyme secretion by Erwinia chrysanthemi: sequence comparison with secretion genes from other Gram-negative bacteria.</title>
        <authorList>
            <person name="Lindeberg M."/>
            <person name="Collmer A."/>
        </authorList>
    </citation>
    <scope>NUCLEOTIDE SEQUENCE [GENOMIC DNA]</scope>
    <source>
        <strain>EC16</strain>
    </source>
</reference>
<sequence>MLGKGIKKSWGWLGLTVLLLGSPCGWAAEFSASFKGTDIQEFINTVSKNLNKTVIIDPTVRGTISVRSYDMMDEGQYYQFFLSVLDVYGFSVVPMDNGVLKVIRSKDAKSSSIPLANNEQPGVGDELVTRVVPLNNVAARDLAPLLRQLNDNAGAGTVVHYEPSNVLLMTGRAAVIKRLVDIVNTVDKTGDREMITVSLNYASAEDVAKLVNDLNKTDEKNALPSTMLANVVADGRTNSVVVSGEENTSPCAVEMIRQLDRKQVAQGGTKVIYLKYAKALDLIEVLAGNGTSGNRNSSSTNSSRPSSTRSSSTLNNSNSSSSGSSSGSGSSSSSSSSSMGFGSAFGSANSSGGRTIVIQGKEVTVRAHDQTNSLIITRPPDIMRDLEQVINQLDIRRPQVLVEAIIAEIQDADGLNLGIQWANKRAGMTQFTNTGIPISTAMIGTDQFRSDGTLTTAYASALSNFNGITAGFYRGNWSMLLTALSSDGKNDVLATPSIVTLDNMEATFNVGQEVPVLTGSQTTVGSGDNIFNTVERKTVGIKLRVKPQINEGDSVLLQIEQEVSSVAEGNGSSNSSLGVTFNTRTVNNAVMVTNRETVVVGGLLDKTAIETNNKVPLLGDIPWLGSLFRSKTQTMSKRNLMLFLRPTIIRDPQQYQQASISKYNSFNNEQQQQRGQGNSVLDNNTLRLSGGNTYTFRQVQSSISAFYQPEGR</sequence>
<evidence type="ECO:0000250" key="1">
    <source>
        <dbReference type="UniProtKB" id="E3PJ86"/>
    </source>
</evidence>
<evidence type="ECO:0000250" key="2">
    <source>
        <dbReference type="UniProtKB" id="P45779"/>
    </source>
</evidence>
<evidence type="ECO:0000255" key="3"/>
<evidence type="ECO:0000256" key="4">
    <source>
        <dbReference type="SAM" id="MobiDB-lite"/>
    </source>
</evidence>
<evidence type="ECO:0000305" key="5"/>
<evidence type="ECO:0000305" key="6">
    <source>
    </source>
</evidence>
<name>GSPD1_DICCH</name>
<accession>P31700</accession>
<proteinExistence type="inferred from homology"/>
<feature type="signal peptide" evidence="3">
    <location>
        <begin position="1"/>
        <end position="27"/>
    </location>
</feature>
<feature type="chain" id="PRO_0000013100" description="Secretin OutD">
    <location>
        <begin position="28"/>
        <end position="712"/>
    </location>
</feature>
<feature type="region of interest" description="N0" evidence="2">
    <location>
        <begin position="28"/>
        <end position="124"/>
    </location>
</feature>
<feature type="region of interest" description="N1" evidence="2">
    <location>
        <begin position="126"/>
        <end position="190"/>
    </location>
</feature>
<feature type="region of interest" description="N2" evidence="2">
    <location>
        <begin position="191"/>
        <end position="264"/>
    </location>
</feature>
<feature type="region of interest" description="N3" evidence="2">
    <location>
        <begin position="267"/>
        <end position="394"/>
    </location>
</feature>
<feature type="region of interest" description="Disordered" evidence="4">
    <location>
        <begin position="288"/>
        <end position="342"/>
    </location>
</feature>
<feature type="region of interest" description="Secretin" evidence="2">
    <location>
        <begin position="399"/>
        <end position="651"/>
    </location>
</feature>
<feature type="region of interest" description="S domain" evidence="2">
    <location>
        <begin position="653"/>
        <end position="712"/>
    </location>
</feature>
<feature type="site" description="May serve as a pivot that allows opening of the central gate for substrate egress" evidence="2">
    <location>
        <position position="511"/>
    </location>
</feature>
<protein>
    <recommendedName>
        <fullName>Secretin OutD</fullName>
    </recommendedName>
    <alternativeName>
        <fullName>General secretion pathway protein D</fullName>
    </alternativeName>
    <alternativeName>
        <fullName>Pectic enzymes secretion protein OutD</fullName>
    </alternativeName>
    <alternativeName>
        <fullName>Type II secretion system protein D</fullName>
        <shortName>T2SS protein D</shortName>
    </alternativeName>
</protein>
<dbReference type="EMBL" id="L02214">
    <property type="protein sequence ID" value="AAA24831.1"/>
    <property type="molecule type" value="Genomic_DNA"/>
</dbReference>
<dbReference type="PIR" id="B47021">
    <property type="entry name" value="B47021"/>
</dbReference>
<dbReference type="SMR" id="P31700"/>
<dbReference type="GO" id="GO:0009279">
    <property type="term" value="C:cell outer membrane"/>
    <property type="evidence" value="ECO:0007669"/>
    <property type="project" value="UniProtKB-SubCell"/>
</dbReference>
<dbReference type="GO" id="GO:0015627">
    <property type="term" value="C:type II protein secretion system complex"/>
    <property type="evidence" value="ECO:0007669"/>
    <property type="project" value="InterPro"/>
</dbReference>
<dbReference type="GO" id="GO:0015628">
    <property type="term" value="P:protein secretion by the type II secretion system"/>
    <property type="evidence" value="ECO:0007669"/>
    <property type="project" value="InterPro"/>
</dbReference>
<dbReference type="Gene3D" id="3.30.1370.120">
    <property type="match status" value="3"/>
</dbReference>
<dbReference type="InterPro" id="IPR050810">
    <property type="entry name" value="Bact_Secretion_Sys_Channel"/>
</dbReference>
<dbReference type="InterPro" id="IPR049371">
    <property type="entry name" value="GspD-like_N0"/>
</dbReference>
<dbReference type="InterPro" id="IPR001775">
    <property type="entry name" value="GspD/PilQ"/>
</dbReference>
<dbReference type="InterPro" id="IPR005644">
    <property type="entry name" value="NolW-like"/>
</dbReference>
<dbReference type="InterPro" id="IPR038591">
    <property type="entry name" value="NolW-like_sf"/>
</dbReference>
<dbReference type="InterPro" id="IPR004846">
    <property type="entry name" value="T2SS/T3SS_dom"/>
</dbReference>
<dbReference type="InterPro" id="IPR013356">
    <property type="entry name" value="T2SS_GspD"/>
</dbReference>
<dbReference type="InterPro" id="IPR004845">
    <property type="entry name" value="T2SS_GspD_CS"/>
</dbReference>
<dbReference type="NCBIfam" id="TIGR02517">
    <property type="entry name" value="type_II_gspD"/>
    <property type="match status" value="1"/>
</dbReference>
<dbReference type="PANTHER" id="PTHR30332">
    <property type="entry name" value="PROBABLE GENERAL SECRETION PATHWAY PROTEIN D"/>
    <property type="match status" value="1"/>
</dbReference>
<dbReference type="PANTHER" id="PTHR30332:SF24">
    <property type="entry name" value="SECRETIN GSPD-RELATED"/>
    <property type="match status" value="1"/>
</dbReference>
<dbReference type="Pfam" id="PF00263">
    <property type="entry name" value="Secretin"/>
    <property type="match status" value="1"/>
</dbReference>
<dbReference type="Pfam" id="PF03958">
    <property type="entry name" value="Secretin_N"/>
    <property type="match status" value="3"/>
</dbReference>
<dbReference type="Pfam" id="PF21305">
    <property type="entry name" value="type_II_gspD_N0"/>
    <property type="match status" value="1"/>
</dbReference>
<dbReference type="PRINTS" id="PR00811">
    <property type="entry name" value="BCTERIALGSPD"/>
</dbReference>
<dbReference type="PROSITE" id="PS00875">
    <property type="entry name" value="T2SP_D"/>
    <property type="match status" value="1"/>
</dbReference>